<protein>
    <recommendedName>
        <fullName>Pre-mRNA-splicing factor cwc24</fullName>
    </recommendedName>
</protein>
<proteinExistence type="inferred from homology"/>
<comment type="function">
    <text evidence="1">Involved in pre-mRNA splicing.</text>
</comment>
<comment type="subunit">
    <text evidence="1">Associated with the spliceosome.</text>
</comment>
<comment type="subcellular location">
    <subcellularLocation>
        <location evidence="1">Nucleus</location>
    </subcellularLocation>
</comment>
<comment type="similarity">
    <text evidence="5">Belongs to the CWC24 family.</text>
</comment>
<evidence type="ECO:0000250" key="1"/>
<evidence type="ECO:0000255" key="2">
    <source>
        <dbReference type="PROSITE-ProRule" id="PRU00175"/>
    </source>
</evidence>
<evidence type="ECO:0000255" key="3">
    <source>
        <dbReference type="PROSITE-ProRule" id="PRU00723"/>
    </source>
</evidence>
<evidence type="ECO:0000256" key="4">
    <source>
        <dbReference type="SAM" id="MobiDB-lite"/>
    </source>
</evidence>
<evidence type="ECO:0000305" key="5"/>
<keyword id="KW-0238">DNA-binding</keyword>
<keyword id="KW-0479">Metal-binding</keyword>
<keyword id="KW-0507">mRNA processing</keyword>
<keyword id="KW-0508">mRNA splicing</keyword>
<keyword id="KW-0539">Nucleus</keyword>
<keyword id="KW-1185">Reference proteome</keyword>
<keyword id="KW-0747">Spliceosome</keyword>
<keyword id="KW-0862">Zinc</keyword>
<keyword id="KW-0863">Zinc-finger</keyword>
<name>CWC24_EMENI</name>
<dbReference type="EMBL" id="AACD01000132">
    <property type="protein sequence ID" value="EAA61543.1"/>
    <property type="molecule type" value="Genomic_DNA"/>
</dbReference>
<dbReference type="EMBL" id="BN001304">
    <property type="protein sequence ID" value="CBF80042.1"/>
    <property type="molecule type" value="Genomic_DNA"/>
</dbReference>
<dbReference type="RefSeq" id="XP_681024.1">
    <property type="nucleotide sequence ID" value="XM_675932.1"/>
</dbReference>
<dbReference type="STRING" id="227321.Q5AVC5"/>
<dbReference type="EnsemblFungi" id="CBF80042">
    <property type="protein sequence ID" value="CBF80042"/>
    <property type="gene ID" value="ANIA_07755"/>
</dbReference>
<dbReference type="KEGG" id="ani:ANIA_07755"/>
<dbReference type="VEuPathDB" id="FungiDB:AN7755"/>
<dbReference type="eggNOG" id="KOG1813">
    <property type="taxonomic scope" value="Eukaryota"/>
</dbReference>
<dbReference type="HOGENOM" id="CLU_050460_0_0_1"/>
<dbReference type="InParanoid" id="Q5AVC5"/>
<dbReference type="OMA" id="ANFRKKP"/>
<dbReference type="OrthoDB" id="25761at2759"/>
<dbReference type="Proteomes" id="UP000000560">
    <property type="component" value="Chromosome IV"/>
</dbReference>
<dbReference type="GO" id="GO:0005684">
    <property type="term" value="C:U2-type spliceosomal complex"/>
    <property type="evidence" value="ECO:0000318"/>
    <property type="project" value="GO_Central"/>
</dbReference>
<dbReference type="GO" id="GO:0003677">
    <property type="term" value="F:DNA binding"/>
    <property type="evidence" value="ECO:0007669"/>
    <property type="project" value="UniProtKB-KW"/>
</dbReference>
<dbReference type="GO" id="GO:0008270">
    <property type="term" value="F:zinc ion binding"/>
    <property type="evidence" value="ECO:0007669"/>
    <property type="project" value="UniProtKB-KW"/>
</dbReference>
<dbReference type="GO" id="GO:0006397">
    <property type="term" value="P:mRNA processing"/>
    <property type="evidence" value="ECO:0007669"/>
    <property type="project" value="UniProtKB-KW"/>
</dbReference>
<dbReference type="GO" id="GO:0034247">
    <property type="term" value="P:snoRNA splicing"/>
    <property type="evidence" value="ECO:0000318"/>
    <property type="project" value="GO_Central"/>
</dbReference>
<dbReference type="CDD" id="cd16539">
    <property type="entry name" value="RING-HC_RNF113A_B"/>
    <property type="match status" value="1"/>
</dbReference>
<dbReference type="FunFam" id="3.30.40.10:FF:000045">
    <property type="entry name" value="RING finger protein 113A"/>
    <property type="match status" value="1"/>
</dbReference>
<dbReference type="Gene3D" id="3.30.40.10">
    <property type="entry name" value="Zinc/RING finger domain, C3HC4 (zinc finger)"/>
    <property type="match status" value="1"/>
</dbReference>
<dbReference type="InterPro" id="IPR039971">
    <property type="entry name" value="CWC24-like"/>
</dbReference>
<dbReference type="InterPro" id="IPR000571">
    <property type="entry name" value="Znf_CCCH"/>
</dbReference>
<dbReference type="InterPro" id="IPR036855">
    <property type="entry name" value="Znf_CCCH_sf"/>
</dbReference>
<dbReference type="InterPro" id="IPR001841">
    <property type="entry name" value="Znf_RING"/>
</dbReference>
<dbReference type="InterPro" id="IPR013083">
    <property type="entry name" value="Znf_RING/FYVE/PHD"/>
</dbReference>
<dbReference type="InterPro" id="IPR017907">
    <property type="entry name" value="Znf_RING_CS"/>
</dbReference>
<dbReference type="PANTHER" id="PTHR12930:SF0">
    <property type="entry name" value="RING FINGER PROTEIN 113B"/>
    <property type="match status" value="1"/>
</dbReference>
<dbReference type="PANTHER" id="PTHR12930">
    <property type="entry name" value="ZINC FINGER PROTEIN 183"/>
    <property type="match status" value="1"/>
</dbReference>
<dbReference type="Pfam" id="PF13923">
    <property type="entry name" value="zf-C3HC4_2"/>
    <property type="match status" value="1"/>
</dbReference>
<dbReference type="Pfam" id="PF00642">
    <property type="entry name" value="zf-CCCH"/>
    <property type="match status" value="1"/>
</dbReference>
<dbReference type="SMART" id="SM00184">
    <property type="entry name" value="RING"/>
    <property type="match status" value="1"/>
</dbReference>
<dbReference type="SMART" id="SM00356">
    <property type="entry name" value="ZnF_C3H1"/>
    <property type="match status" value="1"/>
</dbReference>
<dbReference type="SUPFAM" id="SSF90229">
    <property type="entry name" value="CCCH zinc finger"/>
    <property type="match status" value="1"/>
</dbReference>
<dbReference type="SUPFAM" id="SSF57850">
    <property type="entry name" value="RING/U-box"/>
    <property type="match status" value="1"/>
</dbReference>
<dbReference type="PROSITE" id="PS50103">
    <property type="entry name" value="ZF_C3H1"/>
    <property type="match status" value="1"/>
</dbReference>
<dbReference type="PROSITE" id="PS00518">
    <property type="entry name" value="ZF_RING_1"/>
    <property type="match status" value="1"/>
</dbReference>
<dbReference type="PROSITE" id="PS50089">
    <property type="entry name" value="ZF_RING_2"/>
    <property type="match status" value="1"/>
</dbReference>
<accession>Q5AVC5</accession>
<accession>C8VDM3</accession>
<sequence length="332" mass="36570">MADTAPQVSFKKRSVKKTNFRKKPESPPPDADSDSSFTSSDDEEGHRIKRRRKNAAVSASSTSNTRRTTTSDEPATAGAAVPLTASNDATKHSNWYDDELNEKNLLGTTRARPAATGADAPDGTYKGAANYQSFIQKNPNAPAKTFGPIKAPTNVRTVTFMDYAPDVCKDYKLTGYCGFGDSCKFSHMREDYKQGWELDRDWEVSTKGKNLGGKVVSQRGGQAGEDEDDEEEQLENIPFACIICKKPYQNPIVTKCGHYFCESCALQRYRKNPSCAACGAGTGGVFNVAKKLNGLLEKKRERARQRREQAIANGEEVSSEEDEDEDEEQNSS</sequence>
<reference key="1">
    <citation type="journal article" date="2005" name="Nature">
        <title>Sequencing of Aspergillus nidulans and comparative analysis with A. fumigatus and A. oryzae.</title>
        <authorList>
            <person name="Galagan J.E."/>
            <person name="Calvo S.E."/>
            <person name="Cuomo C."/>
            <person name="Ma L.-J."/>
            <person name="Wortman J.R."/>
            <person name="Batzoglou S."/>
            <person name="Lee S.-I."/>
            <person name="Bastuerkmen M."/>
            <person name="Spevak C.C."/>
            <person name="Clutterbuck J."/>
            <person name="Kapitonov V."/>
            <person name="Jurka J."/>
            <person name="Scazzocchio C."/>
            <person name="Farman M.L."/>
            <person name="Butler J."/>
            <person name="Purcell S."/>
            <person name="Harris S."/>
            <person name="Braus G.H."/>
            <person name="Draht O."/>
            <person name="Busch S."/>
            <person name="D'Enfert C."/>
            <person name="Bouchier C."/>
            <person name="Goldman G.H."/>
            <person name="Bell-Pedersen D."/>
            <person name="Griffiths-Jones S."/>
            <person name="Doonan J.H."/>
            <person name="Yu J."/>
            <person name="Vienken K."/>
            <person name="Pain A."/>
            <person name="Freitag M."/>
            <person name="Selker E.U."/>
            <person name="Archer D.B."/>
            <person name="Penalva M.A."/>
            <person name="Oakley B.R."/>
            <person name="Momany M."/>
            <person name="Tanaka T."/>
            <person name="Kumagai T."/>
            <person name="Asai K."/>
            <person name="Machida M."/>
            <person name="Nierman W.C."/>
            <person name="Denning D.W."/>
            <person name="Caddick M.X."/>
            <person name="Hynes M."/>
            <person name="Paoletti M."/>
            <person name="Fischer R."/>
            <person name="Miller B.L."/>
            <person name="Dyer P.S."/>
            <person name="Sachs M.S."/>
            <person name="Osmani S.A."/>
            <person name="Birren B.W."/>
        </authorList>
    </citation>
    <scope>NUCLEOTIDE SEQUENCE [LARGE SCALE GENOMIC DNA]</scope>
    <source>
        <strain>FGSC A4 / ATCC 38163 / CBS 112.46 / NRRL 194 / M139</strain>
    </source>
</reference>
<reference key="2">
    <citation type="journal article" date="2009" name="Fungal Genet. Biol.">
        <title>The 2008 update of the Aspergillus nidulans genome annotation: a community effort.</title>
        <authorList>
            <person name="Wortman J.R."/>
            <person name="Gilsenan J.M."/>
            <person name="Joardar V."/>
            <person name="Deegan J."/>
            <person name="Clutterbuck J."/>
            <person name="Andersen M.R."/>
            <person name="Archer D."/>
            <person name="Bencina M."/>
            <person name="Braus G."/>
            <person name="Coutinho P."/>
            <person name="von Dohren H."/>
            <person name="Doonan J."/>
            <person name="Driessen A.J."/>
            <person name="Durek P."/>
            <person name="Espeso E."/>
            <person name="Fekete E."/>
            <person name="Flipphi M."/>
            <person name="Estrada C.G."/>
            <person name="Geysens S."/>
            <person name="Goldman G."/>
            <person name="de Groot P.W."/>
            <person name="Hansen K."/>
            <person name="Harris S.D."/>
            <person name="Heinekamp T."/>
            <person name="Helmstaedt K."/>
            <person name="Henrissat B."/>
            <person name="Hofmann G."/>
            <person name="Homan T."/>
            <person name="Horio T."/>
            <person name="Horiuchi H."/>
            <person name="James S."/>
            <person name="Jones M."/>
            <person name="Karaffa L."/>
            <person name="Karanyi Z."/>
            <person name="Kato M."/>
            <person name="Keller N."/>
            <person name="Kelly D.E."/>
            <person name="Kiel J.A."/>
            <person name="Kim J.M."/>
            <person name="van der Klei I.J."/>
            <person name="Klis F.M."/>
            <person name="Kovalchuk A."/>
            <person name="Krasevec N."/>
            <person name="Kubicek C.P."/>
            <person name="Liu B."/>
            <person name="Maccabe A."/>
            <person name="Meyer V."/>
            <person name="Mirabito P."/>
            <person name="Miskei M."/>
            <person name="Mos M."/>
            <person name="Mullins J."/>
            <person name="Nelson D.R."/>
            <person name="Nielsen J."/>
            <person name="Oakley B.R."/>
            <person name="Osmani S.A."/>
            <person name="Pakula T."/>
            <person name="Paszewski A."/>
            <person name="Paulsen I."/>
            <person name="Pilsyk S."/>
            <person name="Pocsi I."/>
            <person name="Punt P.J."/>
            <person name="Ram A.F."/>
            <person name="Ren Q."/>
            <person name="Robellet X."/>
            <person name="Robson G."/>
            <person name="Seiboth B."/>
            <person name="van Solingen P."/>
            <person name="Specht T."/>
            <person name="Sun J."/>
            <person name="Taheri-Talesh N."/>
            <person name="Takeshita N."/>
            <person name="Ussery D."/>
            <person name="vanKuyk P.A."/>
            <person name="Visser H."/>
            <person name="van de Vondervoort P.J."/>
            <person name="de Vries R.P."/>
            <person name="Walton J."/>
            <person name="Xiang X."/>
            <person name="Xiong Y."/>
            <person name="Zeng A.P."/>
            <person name="Brandt B.W."/>
            <person name="Cornell M.J."/>
            <person name="van den Hondel C.A."/>
            <person name="Visser J."/>
            <person name="Oliver S.G."/>
            <person name="Turner G."/>
        </authorList>
    </citation>
    <scope>GENOME REANNOTATION</scope>
    <source>
        <strain>FGSC A4 / ATCC 38163 / CBS 112.46 / NRRL 194 / M139</strain>
    </source>
</reference>
<organism>
    <name type="scientific">Emericella nidulans (strain FGSC A4 / ATCC 38163 / CBS 112.46 / NRRL 194 / M139)</name>
    <name type="common">Aspergillus nidulans</name>
    <dbReference type="NCBI Taxonomy" id="227321"/>
    <lineage>
        <taxon>Eukaryota</taxon>
        <taxon>Fungi</taxon>
        <taxon>Dikarya</taxon>
        <taxon>Ascomycota</taxon>
        <taxon>Pezizomycotina</taxon>
        <taxon>Eurotiomycetes</taxon>
        <taxon>Eurotiomycetidae</taxon>
        <taxon>Eurotiales</taxon>
        <taxon>Aspergillaceae</taxon>
        <taxon>Aspergillus</taxon>
        <taxon>Aspergillus subgen. Nidulantes</taxon>
    </lineage>
</organism>
<gene>
    <name type="primary">cwc24</name>
    <name type="ORF">AN7755</name>
</gene>
<feature type="chain" id="PRO_0000055889" description="Pre-mRNA-splicing factor cwc24">
    <location>
        <begin position="1"/>
        <end position="332"/>
    </location>
</feature>
<feature type="zinc finger region" description="C3H1-type" evidence="3">
    <location>
        <begin position="162"/>
        <end position="190"/>
    </location>
</feature>
<feature type="zinc finger region" description="RING-type" evidence="2">
    <location>
        <begin position="241"/>
        <end position="279"/>
    </location>
</feature>
<feature type="region of interest" description="Disordered" evidence="4">
    <location>
        <begin position="1"/>
        <end position="95"/>
    </location>
</feature>
<feature type="region of interest" description="Disordered" evidence="4">
    <location>
        <begin position="299"/>
        <end position="332"/>
    </location>
</feature>
<feature type="compositionally biased region" description="Basic residues" evidence="4">
    <location>
        <begin position="10"/>
        <end position="21"/>
    </location>
</feature>
<feature type="compositionally biased region" description="Low complexity" evidence="4">
    <location>
        <begin position="55"/>
        <end position="68"/>
    </location>
</feature>
<feature type="compositionally biased region" description="Acidic residues" evidence="4">
    <location>
        <begin position="317"/>
        <end position="332"/>
    </location>
</feature>